<reference key="1">
    <citation type="journal article" date="1998" name="Science">
        <title>Genome sequence of the nematode C. elegans: a platform for investigating biology.</title>
        <authorList>
            <consortium name="The C. elegans sequencing consortium"/>
        </authorList>
    </citation>
    <scope>NUCLEOTIDE SEQUENCE [LARGE SCALE GENOMIC DNA]</scope>
    <source>
        <strain>Bristol N2</strain>
    </source>
</reference>
<keyword id="KW-0472">Membrane</keyword>
<keyword id="KW-1185">Reference proteome</keyword>
<keyword id="KW-0812">Transmembrane</keyword>
<keyword id="KW-1133">Transmembrane helix</keyword>
<name>SRH72_CAEEL</name>
<organism>
    <name type="scientific">Caenorhabditis elegans</name>
    <dbReference type="NCBI Taxonomy" id="6239"/>
    <lineage>
        <taxon>Eukaryota</taxon>
        <taxon>Metazoa</taxon>
        <taxon>Ecdysozoa</taxon>
        <taxon>Nematoda</taxon>
        <taxon>Chromadorea</taxon>
        <taxon>Rhabditida</taxon>
        <taxon>Rhabditina</taxon>
        <taxon>Rhabditomorpha</taxon>
        <taxon>Rhabditoidea</taxon>
        <taxon>Rhabditidae</taxon>
        <taxon>Peloderinae</taxon>
        <taxon>Caenorhabditis</taxon>
    </lineage>
</organism>
<comment type="subcellular location">
    <subcellularLocation>
        <location evidence="2">Membrane</location>
        <topology evidence="2">Multi-pass membrane protein</topology>
    </subcellularLocation>
</comment>
<comment type="similarity">
    <text evidence="2">Belongs to the nematode receptor-like protein srh family.</text>
</comment>
<feature type="chain" id="PRO_0000104575" description="Serpentine receptor class H-72">
    <location>
        <begin position="1"/>
        <end position="344"/>
    </location>
</feature>
<feature type="transmembrane region" description="Helical" evidence="1">
    <location>
        <begin position="30"/>
        <end position="50"/>
    </location>
</feature>
<feature type="transmembrane region" description="Helical" evidence="1">
    <location>
        <begin position="66"/>
        <end position="86"/>
    </location>
</feature>
<feature type="transmembrane region" description="Helical" evidence="1">
    <location>
        <begin position="110"/>
        <end position="132"/>
    </location>
</feature>
<feature type="transmembrane region" description="Helical" evidence="1">
    <location>
        <begin position="155"/>
        <end position="175"/>
    </location>
</feature>
<feature type="transmembrane region" description="Helical" evidence="1">
    <location>
        <begin position="221"/>
        <end position="241"/>
    </location>
</feature>
<feature type="transmembrane region" description="Helical" evidence="1">
    <location>
        <begin position="259"/>
        <end position="279"/>
    </location>
</feature>
<feature type="transmembrane region" description="Helical" evidence="1">
    <location>
        <begin position="292"/>
        <end position="312"/>
    </location>
</feature>
<sequence>MSEASLSTYYTTIYPTKCPPDPRFLVSKEGLAFCCQIIGFISLPMHFFTGYCILMKTPATMKHVKLSLVNLNIWYIISQVIVSFFITSYNFYPSLASFSVGYATALNFPTVVQICILYTINDAVHVSITLLFEIRSSLILKNRFRISSSRGRGYWLAGNFFGTVFITSPVFFNLADQNAEKMKILEAIPCPSKEFFLEPITVFATSGAWNTYLLISRSLKSIYMLQIIFFTSCCIYYLVIVKTDQVSAQTRRIQARSFYGLIIQTLIPAAFTLIPSVLISSRSAPDQLVNNLVSISYAVHIVVGSLAILLVHHPYRLFIKSIFVKSKESVIVPVVSTSMFKVIK</sequence>
<protein>
    <recommendedName>
        <fullName>Serpentine receptor class H-72</fullName>
        <shortName>Protein srh-72</shortName>
    </recommendedName>
</protein>
<proteinExistence type="inferred from homology"/>
<dbReference type="EMBL" id="FO080436">
    <property type="protein sequence ID" value="CCD63686.1"/>
    <property type="molecule type" value="Genomic_DNA"/>
</dbReference>
<dbReference type="PIR" id="T25951">
    <property type="entry name" value="T25951"/>
</dbReference>
<dbReference type="RefSeq" id="NP_494021.1">
    <property type="nucleotide sequence ID" value="NM_061620.2"/>
</dbReference>
<dbReference type="SMR" id="P91536"/>
<dbReference type="FunCoup" id="P91536">
    <property type="interactions" value="16"/>
</dbReference>
<dbReference type="PaxDb" id="6239-ZC204.5"/>
<dbReference type="EnsemblMetazoa" id="ZC204.5.1">
    <property type="protein sequence ID" value="ZC204.5.1"/>
    <property type="gene ID" value="WBGene00005293"/>
</dbReference>
<dbReference type="GeneID" id="191869"/>
<dbReference type="KEGG" id="cel:CELE_ZC204.5"/>
<dbReference type="UCSC" id="ZC204.5">
    <property type="organism name" value="c. elegans"/>
</dbReference>
<dbReference type="AGR" id="WB:WBGene00005293"/>
<dbReference type="CTD" id="191869"/>
<dbReference type="WormBase" id="ZC204.5">
    <property type="protein sequence ID" value="CE15092"/>
    <property type="gene ID" value="WBGene00005293"/>
    <property type="gene designation" value="srh-72"/>
</dbReference>
<dbReference type="GeneTree" id="ENSGT00970000195835"/>
<dbReference type="HOGENOM" id="CLU_042960_0_0_1"/>
<dbReference type="InParanoid" id="P91536"/>
<dbReference type="OrthoDB" id="5854902at2759"/>
<dbReference type="PhylomeDB" id="P91536"/>
<dbReference type="PRO" id="PR:P91536"/>
<dbReference type="Proteomes" id="UP000001940">
    <property type="component" value="Chromosome II"/>
</dbReference>
<dbReference type="Bgee" id="WBGene00005293">
    <property type="expression patterns" value="Expressed in multicellular organism and 1 other cell type or tissue"/>
</dbReference>
<dbReference type="GO" id="GO:0016020">
    <property type="term" value="C:membrane"/>
    <property type="evidence" value="ECO:0007669"/>
    <property type="project" value="UniProtKB-SubCell"/>
</dbReference>
<dbReference type="InterPro" id="IPR019422">
    <property type="entry name" value="7TM_GPCR_serpentine_rcpt_Srh"/>
</dbReference>
<dbReference type="InterPro" id="IPR053220">
    <property type="entry name" value="Nematode_rcpt-like_serp_H"/>
</dbReference>
<dbReference type="PANTHER" id="PTHR22941">
    <property type="entry name" value="SERPENTINE RECEPTOR"/>
    <property type="match status" value="1"/>
</dbReference>
<dbReference type="PANTHER" id="PTHR22941:SF34">
    <property type="entry name" value="SERPENTINE RECEPTOR, CLASS H-RELATED"/>
    <property type="match status" value="1"/>
</dbReference>
<dbReference type="Pfam" id="PF10318">
    <property type="entry name" value="7TM_GPCR_Srh"/>
    <property type="match status" value="1"/>
</dbReference>
<evidence type="ECO:0000255" key="1"/>
<evidence type="ECO:0000305" key="2"/>
<accession>P91536</accession>
<gene>
    <name type="primary">srh-72</name>
    <name type="ORF">ZC204.5</name>
</gene>